<sequence>MIDERDKIILEILSKDARTPFTEIAKKLGISETAVRKRVKALEEKGIIEGYTIRINPKKLGYSLVTITGVDTRPEKLFEVAEKLKEFEFVRELYLSSGDHMIMAVIWARDGEDLADIISNKIGKIDGVTKVCPAIILEKLK</sequence>
<gene>
    <name type="primary">lrpA</name>
    <name type="ordered locus">PH1592</name>
</gene>
<organism>
    <name type="scientific">Pyrococcus horikoshii (strain ATCC 700860 / DSM 12428 / JCM 9974 / NBRC 100139 / OT-3)</name>
    <dbReference type="NCBI Taxonomy" id="70601"/>
    <lineage>
        <taxon>Archaea</taxon>
        <taxon>Methanobacteriati</taxon>
        <taxon>Methanobacteriota</taxon>
        <taxon>Thermococci</taxon>
        <taxon>Thermococcales</taxon>
        <taxon>Thermococcaceae</taxon>
        <taxon>Pyrococcus</taxon>
    </lineage>
</organism>
<accession>O59256</accession>
<dbReference type="EMBL" id="BA000001">
    <property type="protein sequence ID" value="BAA30704.1"/>
    <property type="molecule type" value="Genomic_DNA"/>
</dbReference>
<dbReference type="PIR" id="H71037">
    <property type="entry name" value="H71037"/>
</dbReference>
<dbReference type="RefSeq" id="WP_010885666.1">
    <property type="nucleotide sequence ID" value="NC_000961.1"/>
</dbReference>
<dbReference type="SMR" id="O59256"/>
<dbReference type="STRING" id="70601.gene:9378582"/>
<dbReference type="EnsemblBacteria" id="BAA30704">
    <property type="protein sequence ID" value="BAA30704"/>
    <property type="gene ID" value="BAA30704"/>
</dbReference>
<dbReference type="GeneID" id="1442445"/>
<dbReference type="KEGG" id="pho:PH1592"/>
<dbReference type="eggNOG" id="arCOG01580">
    <property type="taxonomic scope" value="Archaea"/>
</dbReference>
<dbReference type="OrthoDB" id="6995at2157"/>
<dbReference type="Proteomes" id="UP000000752">
    <property type="component" value="Chromosome"/>
</dbReference>
<dbReference type="GO" id="GO:0043565">
    <property type="term" value="F:sequence-specific DNA binding"/>
    <property type="evidence" value="ECO:0007669"/>
    <property type="project" value="InterPro"/>
</dbReference>
<dbReference type="CDD" id="cd00090">
    <property type="entry name" value="HTH_ARSR"/>
    <property type="match status" value="1"/>
</dbReference>
<dbReference type="Gene3D" id="3.30.70.920">
    <property type="match status" value="1"/>
</dbReference>
<dbReference type="Gene3D" id="1.10.10.10">
    <property type="entry name" value="Winged helix-like DNA-binding domain superfamily/Winged helix DNA-binding domain"/>
    <property type="match status" value="1"/>
</dbReference>
<dbReference type="InterPro" id="IPR011991">
    <property type="entry name" value="ArsR-like_HTH"/>
</dbReference>
<dbReference type="InterPro" id="IPR000485">
    <property type="entry name" value="AsnC-type_HTH_dom"/>
</dbReference>
<dbReference type="InterPro" id="IPR011008">
    <property type="entry name" value="Dimeric_a/b-barrel"/>
</dbReference>
<dbReference type="InterPro" id="IPR053456">
    <property type="entry name" value="HTH-LrpA_regulator"/>
</dbReference>
<dbReference type="InterPro" id="IPR050684">
    <property type="entry name" value="HTH-Siroheme_Decarb"/>
</dbReference>
<dbReference type="InterPro" id="IPR019888">
    <property type="entry name" value="Tscrpt_reg_AsnC-like"/>
</dbReference>
<dbReference type="InterPro" id="IPR019887">
    <property type="entry name" value="Tscrpt_reg_AsnC/Lrp_C"/>
</dbReference>
<dbReference type="InterPro" id="IPR019885">
    <property type="entry name" value="Tscrpt_reg_HTH_AsnC-type_CS"/>
</dbReference>
<dbReference type="InterPro" id="IPR036388">
    <property type="entry name" value="WH-like_DNA-bd_sf"/>
</dbReference>
<dbReference type="InterPro" id="IPR036390">
    <property type="entry name" value="WH_DNA-bd_sf"/>
</dbReference>
<dbReference type="NCBIfam" id="NF040820">
    <property type="entry name" value="trans_reg_LrpA"/>
    <property type="match status" value="1"/>
</dbReference>
<dbReference type="PANTHER" id="PTHR43413:SF7">
    <property type="entry name" value="HTH-TYPE TRANSCRIPTIONAL REGULATOR PTR2"/>
    <property type="match status" value="1"/>
</dbReference>
<dbReference type="PANTHER" id="PTHR43413">
    <property type="entry name" value="TRANSCRIPTIONAL REGULATOR, ASNC FAMILY"/>
    <property type="match status" value="1"/>
</dbReference>
<dbReference type="Pfam" id="PF01037">
    <property type="entry name" value="AsnC_trans_reg"/>
    <property type="match status" value="1"/>
</dbReference>
<dbReference type="Pfam" id="PF13412">
    <property type="entry name" value="HTH_24"/>
    <property type="match status" value="1"/>
</dbReference>
<dbReference type="PRINTS" id="PR00033">
    <property type="entry name" value="HTHASNC"/>
</dbReference>
<dbReference type="SMART" id="SM00344">
    <property type="entry name" value="HTH_ASNC"/>
    <property type="match status" value="1"/>
</dbReference>
<dbReference type="SUPFAM" id="SSF54909">
    <property type="entry name" value="Dimeric alpha+beta barrel"/>
    <property type="match status" value="1"/>
</dbReference>
<dbReference type="SUPFAM" id="SSF46785">
    <property type="entry name" value="Winged helix' DNA-binding domain"/>
    <property type="match status" value="1"/>
</dbReference>
<dbReference type="PROSITE" id="PS00519">
    <property type="entry name" value="HTH_ASNC_1"/>
    <property type="match status" value="1"/>
</dbReference>
<dbReference type="PROSITE" id="PS50956">
    <property type="entry name" value="HTH_ASNC_2"/>
    <property type="match status" value="1"/>
</dbReference>
<protein>
    <recommendedName>
        <fullName>HTH-type transcriptional regulator LrpA</fullName>
    </recommendedName>
</protein>
<keyword id="KW-0238">DNA-binding</keyword>
<keyword id="KW-0678">Repressor</keyword>
<keyword id="KW-0804">Transcription</keyword>
<keyword id="KW-0805">Transcription regulation</keyword>
<proteinExistence type="inferred from homology"/>
<name>REG7_PYRHO</name>
<comment type="function">
    <text evidence="1">DNA-binding protein that negatively regulates its own transcription. Interferes with RNA polymerase (RNAP) recruitment by inhibiting the association of RNAP with the TBP-TFB promoter complex.</text>
</comment>
<comment type="subunit">
    <text evidence="1">Homooctamer; tetramer of dimers.</text>
</comment>
<evidence type="ECO:0000250" key="1">
    <source>
        <dbReference type="UniProtKB" id="P42180"/>
    </source>
</evidence>
<evidence type="ECO:0000255" key="2">
    <source>
        <dbReference type="PROSITE-ProRule" id="PRU00319"/>
    </source>
</evidence>
<reference key="1">
    <citation type="journal article" date="1998" name="DNA Res.">
        <title>Complete sequence and gene organization of the genome of a hyper-thermophilic archaebacterium, Pyrococcus horikoshii OT3.</title>
        <authorList>
            <person name="Kawarabayasi Y."/>
            <person name="Sawada M."/>
            <person name="Horikawa H."/>
            <person name="Haikawa Y."/>
            <person name="Hino Y."/>
            <person name="Yamamoto S."/>
            <person name="Sekine M."/>
            <person name="Baba S."/>
            <person name="Kosugi H."/>
            <person name="Hosoyama A."/>
            <person name="Nagai Y."/>
            <person name="Sakai M."/>
            <person name="Ogura K."/>
            <person name="Otsuka R."/>
            <person name="Nakazawa H."/>
            <person name="Takamiya M."/>
            <person name="Ohfuku Y."/>
            <person name="Funahashi T."/>
            <person name="Tanaka T."/>
            <person name="Kudoh Y."/>
            <person name="Yamazaki J."/>
            <person name="Kushida N."/>
            <person name="Oguchi A."/>
            <person name="Aoki K."/>
            <person name="Yoshizawa T."/>
            <person name="Nakamura Y."/>
            <person name="Robb F.T."/>
            <person name="Horikoshi K."/>
            <person name="Masuchi Y."/>
            <person name="Shizuya H."/>
            <person name="Kikuchi H."/>
        </authorList>
    </citation>
    <scope>NUCLEOTIDE SEQUENCE [LARGE SCALE GENOMIC DNA]</scope>
    <source>
        <strain>ATCC 700860 / DSM 12428 / JCM 9974 / NBRC 100139 / OT-3</strain>
    </source>
</reference>
<feature type="chain" id="PRO_0000111772" description="HTH-type transcriptional regulator LrpA">
    <location>
        <begin position="1"/>
        <end position="141"/>
    </location>
</feature>
<feature type="domain" description="HTH asnC-type" evidence="2">
    <location>
        <begin position="2"/>
        <end position="63"/>
    </location>
</feature>
<feature type="DNA-binding region" description="H-T-H motif" evidence="2">
    <location>
        <begin position="21"/>
        <end position="40"/>
    </location>
</feature>